<reference key="1">
    <citation type="journal article" date="2006" name="PLoS Genet.">
        <title>Genome sequence of Rickettsia bellii illuminates the role of amoebae in gene exchanges between intracellular pathogens.</title>
        <authorList>
            <person name="Ogata H."/>
            <person name="La Scola B."/>
            <person name="Audic S."/>
            <person name="Renesto P."/>
            <person name="Blanc G."/>
            <person name="Robert C."/>
            <person name="Fournier P.-E."/>
            <person name="Claverie J.-M."/>
            <person name="Raoult D."/>
        </authorList>
    </citation>
    <scope>NUCLEOTIDE SEQUENCE [LARGE SCALE GENOMIC DNA]</scope>
    <source>
        <strain>RML369-C</strain>
    </source>
</reference>
<keyword id="KW-0067">ATP-binding</keyword>
<keyword id="KW-0963">Cytoplasm</keyword>
<keyword id="KW-0227">DNA damage</keyword>
<keyword id="KW-0228">DNA excision</keyword>
<keyword id="KW-0234">DNA repair</keyword>
<keyword id="KW-0267">Excision nuclease</keyword>
<keyword id="KW-0347">Helicase</keyword>
<keyword id="KW-0378">Hydrolase</keyword>
<keyword id="KW-0547">Nucleotide-binding</keyword>
<keyword id="KW-0742">SOS response</keyword>
<proteinExistence type="inferred from homology"/>
<gene>
    <name evidence="1" type="primary">uvrB</name>
    <name type="ordered locus">RBE_1094</name>
</gene>
<name>UVRB_RICBR</name>
<comment type="function">
    <text evidence="1">The UvrABC repair system catalyzes the recognition and processing of DNA lesions. A damage recognition complex composed of 2 UvrA and 2 UvrB subunits scans DNA for abnormalities. Upon binding of the UvrA(2)B(2) complex to a putative damaged site, the DNA wraps around one UvrB monomer. DNA wrap is dependent on ATP binding by UvrB and probably causes local melting of the DNA helix, facilitating insertion of UvrB beta-hairpin between the DNA strands. Then UvrB probes one DNA strand for the presence of a lesion. If a lesion is found the UvrA subunits dissociate and the UvrB-DNA preincision complex is formed. This complex is subsequently bound by UvrC and the second UvrB is released. If no lesion is found, the DNA wraps around the other UvrB subunit that will check the other stand for damage.</text>
</comment>
<comment type="subunit">
    <text evidence="1">Forms a heterotetramer with UvrA during the search for lesions. Interacts with UvrC in an incision complex.</text>
</comment>
<comment type="subcellular location">
    <subcellularLocation>
        <location evidence="1">Cytoplasm</location>
    </subcellularLocation>
</comment>
<comment type="domain">
    <text evidence="1">The beta-hairpin motif is involved in DNA binding.</text>
</comment>
<comment type="similarity">
    <text evidence="1">Belongs to the UvrB family.</text>
</comment>
<evidence type="ECO:0000255" key="1">
    <source>
        <dbReference type="HAMAP-Rule" id="MF_00204"/>
    </source>
</evidence>
<accession>Q1RHI9</accession>
<feature type="chain" id="PRO_0000277986" description="UvrABC system protein B">
    <location>
        <begin position="1"/>
        <end position="661"/>
    </location>
</feature>
<feature type="domain" description="Helicase ATP-binding" evidence="1">
    <location>
        <begin position="25"/>
        <end position="182"/>
    </location>
</feature>
<feature type="domain" description="Helicase C-terminal" evidence="1">
    <location>
        <begin position="430"/>
        <end position="592"/>
    </location>
</feature>
<feature type="domain" description="UVR" evidence="1">
    <location>
        <begin position="621"/>
        <end position="656"/>
    </location>
</feature>
<feature type="short sequence motif" description="Beta-hairpin">
    <location>
        <begin position="91"/>
        <end position="114"/>
    </location>
</feature>
<feature type="binding site" evidence="1">
    <location>
        <begin position="38"/>
        <end position="45"/>
    </location>
    <ligand>
        <name>ATP</name>
        <dbReference type="ChEBI" id="CHEBI:30616"/>
    </ligand>
</feature>
<organism>
    <name type="scientific">Rickettsia bellii (strain RML369-C)</name>
    <dbReference type="NCBI Taxonomy" id="336407"/>
    <lineage>
        <taxon>Bacteria</taxon>
        <taxon>Pseudomonadati</taxon>
        <taxon>Pseudomonadota</taxon>
        <taxon>Alphaproteobacteria</taxon>
        <taxon>Rickettsiales</taxon>
        <taxon>Rickettsiaceae</taxon>
        <taxon>Rickettsieae</taxon>
        <taxon>Rickettsia</taxon>
        <taxon>belli group</taxon>
    </lineage>
</organism>
<sequence length="661" mass="75518">MSNFSIISDYKPAGDQPKAIDEIIKGLNNKKRSQMLLGITGSGKTFTMANIIERTNRPTLIMAHNKTLAAQIYSEMKSIFPKNAVEYFVSYYDYYQPEAYIPKTDVFIEKDSSINEQIDLMRHSATRSLLERRDVIVVSSVSCIYGLGSPDLYYQMTVNLEPGKSYPRDKLLNDLVNLQYERNDIGFERGCFRVKGDNVDVFPSHYSDKAWRLSFFGNELEYIHEFDPLTGEKLVKLDKAIIYGNSHFVMPKETVNKAISEIEEELQKRIAFLKSQDKLLETQRINQRTQYDLEMLTETGSCKGVENYSRFFTGRKAGEPPPTLFEYLPKDALLFVDESHVSVPQIRAMYNGDRARKEVLVEHGFRLPSALDNRPLKFEEWDNFRPQTVFVSATPSLFELNETGGEVVELIIRPTGLLDPECIIKPATNQVEDLVGEIQSTIAKGFCVLVTTLTKKMAEDLTNYLQELKYKTSYLHSNIHTLERIEILRDLRQGTIDILVGINLLREGLDIPECGLVAILDADKEGFLRSEVSLIQTIGRAARNSEGRVILYADKMTKSIDKAISETMRRRTIQQEHNEKYGIIPKTINRTIHALAELEKVDSKLDKKQTHNLFENPAKLKAHIDKLRKEMLKAASNLEFEQAAKLRDQLKTLEEAALELS</sequence>
<dbReference type="EMBL" id="CP000087">
    <property type="protein sequence ID" value="ABE05175.1"/>
    <property type="molecule type" value="Genomic_DNA"/>
</dbReference>
<dbReference type="RefSeq" id="WP_011477753.1">
    <property type="nucleotide sequence ID" value="NC_007940.1"/>
</dbReference>
<dbReference type="SMR" id="Q1RHI9"/>
<dbReference type="KEGG" id="rbe:RBE_1094"/>
<dbReference type="eggNOG" id="COG0556">
    <property type="taxonomic scope" value="Bacteria"/>
</dbReference>
<dbReference type="HOGENOM" id="CLU_009621_2_1_5"/>
<dbReference type="OrthoDB" id="9806651at2"/>
<dbReference type="Proteomes" id="UP000001951">
    <property type="component" value="Chromosome"/>
</dbReference>
<dbReference type="GO" id="GO:0005737">
    <property type="term" value="C:cytoplasm"/>
    <property type="evidence" value="ECO:0007669"/>
    <property type="project" value="UniProtKB-SubCell"/>
</dbReference>
<dbReference type="GO" id="GO:0009380">
    <property type="term" value="C:excinuclease repair complex"/>
    <property type="evidence" value="ECO:0007669"/>
    <property type="project" value="InterPro"/>
</dbReference>
<dbReference type="GO" id="GO:0005524">
    <property type="term" value="F:ATP binding"/>
    <property type="evidence" value="ECO:0007669"/>
    <property type="project" value="UniProtKB-UniRule"/>
</dbReference>
<dbReference type="GO" id="GO:0016887">
    <property type="term" value="F:ATP hydrolysis activity"/>
    <property type="evidence" value="ECO:0007669"/>
    <property type="project" value="InterPro"/>
</dbReference>
<dbReference type="GO" id="GO:0003677">
    <property type="term" value="F:DNA binding"/>
    <property type="evidence" value="ECO:0007669"/>
    <property type="project" value="UniProtKB-UniRule"/>
</dbReference>
<dbReference type="GO" id="GO:0009381">
    <property type="term" value="F:excinuclease ABC activity"/>
    <property type="evidence" value="ECO:0007669"/>
    <property type="project" value="UniProtKB-UniRule"/>
</dbReference>
<dbReference type="GO" id="GO:0004386">
    <property type="term" value="F:helicase activity"/>
    <property type="evidence" value="ECO:0007669"/>
    <property type="project" value="UniProtKB-KW"/>
</dbReference>
<dbReference type="GO" id="GO:0006289">
    <property type="term" value="P:nucleotide-excision repair"/>
    <property type="evidence" value="ECO:0007669"/>
    <property type="project" value="UniProtKB-UniRule"/>
</dbReference>
<dbReference type="GO" id="GO:0009432">
    <property type="term" value="P:SOS response"/>
    <property type="evidence" value="ECO:0007669"/>
    <property type="project" value="UniProtKB-UniRule"/>
</dbReference>
<dbReference type="CDD" id="cd17916">
    <property type="entry name" value="DEXHc_UvrB"/>
    <property type="match status" value="1"/>
</dbReference>
<dbReference type="CDD" id="cd18790">
    <property type="entry name" value="SF2_C_UvrB"/>
    <property type="match status" value="1"/>
</dbReference>
<dbReference type="Gene3D" id="3.40.50.300">
    <property type="entry name" value="P-loop containing nucleotide triphosphate hydrolases"/>
    <property type="match status" value="3"/>
</dbReference>
<dbReference type="Gene3D" id="4.10.860.10">
    <property type="entry name" value="UVR domain"/>
    <property type="match status" value="1"/>
</dbReference>
<dbReference type="HAMAP" id="MF_00204">
    <property type="entry name" value="UvrB"/>
    <property type="match status" value="1"/>
</dbReference>
<dbReference type="InterPro" id="IPR006935">
    <property type="entry name" value="Helicase/UvrB_N"/>
</dbReference>
<dbReference type="InterPro" id="IPR014001">
    <property type="entry name" value="Helicase_ATP-bd"/>
</dbReference>
<dbReference type="InterPro" id="IPR001650">
    <property type="entry name" value="Helicase_C-like"/>
</dbReference>
<dbReference type="InterPro" id="IPR027417">
    <property type="entry name" value="P-loop_NTPase"/>
</dbReference>
<dbReference type="InterPro" id="IPR001943">
    <property type="entry name" value="UVR_dom"/>
</dbReference>
<dbReference type="InterPro" id="IPR036876">
    <property type="entry name" value="UVR_dom_sf"/>
</dbReference>
<dbReference type="InterPro" id="IPR004807">
    <property type="entry name" value="UvrB"/>
</dbReference>
<dbReference type="InterPro" id="IPR041471">
    <property type="entry name" value="UvrB_inter"/>
</dbReference>
<dbReference type="InterPro" id="IPR024759">
    <property type="entry name" value="UvrB_YAD/RRR_dom"/>
</dbReference>
<dbReference type="NCBIfam" id="NF003673">
    <property type="entry name" value="PRK05298.1"/>
    <property type="match status" value="1"/>
</dbReference>
<dbReference type="NCBIfam" id="TIGR00631">
    <property type="entry name" value="uvrb"/>
    <property type="match status" value="1"/>
</dbReference>
<dbReference type="PANTHER" id="PTHR24029">
    <property type="entry name" value="UVRABC SYSTEM PROTEIN B"/>
    <property type="match status" value="1"/>
</dbReference>
<dbReference type="PANTHER" id="PTHR24029:SF0">
    <property type="entry name" value="UVRABC SYSTEM PROTEIN B"/>
    <property type="match status" value="1"/>
</dbReference>
<dbReference type="Pfam" id="PF00271">
    <property type="entry name" value="Helicase_C"/>
    <property type="match status" value="1"/>
</dbReference>
<dbReference type="Pfam" id="PF04851">
    <property type="entry name" value="ResIII"/>
    <property type="match status" value="1"/>
</dbReference>
<dbReference type="Pfam" id="PF02151">
    <property type="entry name" value="UVR"/>
    <property type="match status" value="1"/>
</dbReference>
<dbReference type="Pfam" id="PF12344">
    <property type="entry name" value="UvrB"/>
    <property type="match status" value="1"/>
</dbReference>
<dbReference type="Pfam" id="PF17757">
    <property type="entry name" value="UvrB_inter"/>
    <property type="match status" value="1"/>
</dbReference>
<dbReference type="SMART" id="SM00487">
    <property type="entry name" value="DEXDc"/>
    <property type="match status" value="1"/>
</dbReference>
<dbReference type="SMART" id="SM00490">
    <property type="entry name" value="HELICc"/>
    <property type="match status" value="1"/>
</dbReference>
<dbReference type="SUPFAM" id="SSF46600">
    <property type="entry name" value="C-terminal UvrC-binding domain of UvrB"/>
    <property type="match status" value="1"/>
</dbReference>
<dbReference type="SUPFAM" id="SSF52540">
    <property type="entry name" value="P-loop containing nucleoside triphosphate hydrolases"/>
    <property type="match status" value="2"/>
</dbReference>
<dbReference type="PROSITE" id="PS51192">
    <property type="entry name" value="HELICASE_ATP_BIND_1"/>
    <property type="match status" value="1"/>
</dbReference>
<dbReference type="PROSITE" id="PS51194">
    <property type="entry name" value="HELICASE_CTER"/>
    <property type="match status" value="1"/>
</dbReference>
<dbReference type="PROSITE" id="PS50151">
    <property type="entry name" value="UVR"/>
    <property type="match status" value="1"/>
</dbReference>
<protein>
    <recommendedName>
        <fullName evidence="1">UvrABC system protein B</fullName>
        <shortName evidence="1">Protein UvrB</shortName>
    </recommendedName>
    <alternativeName>
        <fullName evidence="1">Excinuclease ABC subunit B</fullName>
    </alternativeName>
</protein>